<keyword id="KW-0030">Aminoacyl-tRNA synthetase</keyword>
<keyword id="KW-0067">ATP-binding</keyword>
<keyword id="KW-0963">Cytoplasm</keyword>
<keyword id="KW-0436">Ligase</keyword>
<keyword id="KW-0547">Nucleotide-binding</keyword>
<keyword id="KW-0648">Protein biosynthesis</keyword>
<organism>
    <name type="scientific">Lysinibacillus sphaericus (strain C3-41)</name>
    <dbReference type="NCBI Taxonomy" id="444177"/>
    <lineage>
        <taxon>Bacteria</taxon>
        <taxon>Bacillati</taxon>
        <taxon>Bacillota</taxon>
        <taxon>Bacilli</taxon>
        <taxon>Bacillales</taxon>
        <taxon>Bacillaceae</taxon>
        <taxon>Lysinibacillus</taxon>
    </lineage>
</organism>
<name>SYP_LYSSC</name>
<feature type="chain" id="PRO_1000199405" description="Proline--tRNA ligase">
    <location>
        <begin position="1"/>
        <end position="568"/>
    </location>
</feature>
<accession>B1HQZ9</accession>
<gene>
    <name evidence="1" type="primary">proS</name>
    <name type="ordered locus">Bsph_1592</name>
</gene>
<reference key="1">
    <citation type="journal article" date="2008" name="J. Bacteriol.">
        <title>Complete genome sequence of the mosquitocidal bacterium Bacillus sphaericus C3-41 and comparison with those of closely related Bacillus species.</title>
        <authorList>
            <person name="Hu X."/>
            <person name="Fan W."/>
            <person name="Han B."/>
            <person name="Liu H."/>
            <person name="Zheng D."/>
            <person name="Li Q."/>
            <person name="Dong W."/>
            <person name="Yan J."/>
            <person name="Gao M."/>
            <person name="Berry C."/>
            <person name="Yuan Z."/>
        </authorList>
    </citation>
    <scope>NUCLEOTIDE SEQUENCE [LARGE SCALE GENOMIC DNA]</scope>
    <source>
        <strain>C3-41</strain>
    </source>
</reference>
<evidence type="ECO:0000255" key="1">
    <source>
        <dbReference type="HAMAP-Rule" id="MF_01569"/>
    </source>
</evidence>
<comment type="function">
    <text evidence="1">Catalyzes the attachment of proline to tRNA(Pro) in a two-step reaction: proline is first activated by ATP to form Pro-AMP and then transferred to the acceptor end of tRNA(Pro). As ProRS can inadvertently accommodate and process non-cognate amino acids such as alanine and cysteine, to avoid such errors it has two additional distinct editing activities against alanine. One activity is designated as 'pretransfer' editing and involves the tRNA(Pro)-independent hydrolysis of activated Ala-AMP. The other activity is designated 'posttransfer' editing and involves deacylation of mischarged Ala-tRNA(Pro). The misacylated Cys-tRNA(Pro) is not edited by ProRS.</text>
</comment>
<comment type="catalytic activity">
    <reaction evidence="1">
        <text>tRNA(Pro) + L-proline + ATP = L-prolyl-tRNA(Pro) + AMP + diphosphate</text>
        <dbReference type="Rhea" id="RHEA:14305"/>
        <dbReference type="Rhea" id="RHEA-COMP:9700"/>
        <dbReference type="Rhea" id="RHEA-COMP:9702"/>
        <dbReference type="ChEBI" id="CHEBI:30616"/>
        <dbReference type="ChEBI" id="CHEBI:33019"/>
        <dbReference type="ChEBI" id="CHEBI:60039"/>
        <dbReference type="ChEBI" id="CHEBI:78442"/>
        <dbReference type="ChEBI" id="CHEBI:78532"/>
        <dbReference type="ChEBI" id="CHEBI:456215"/>
        <dbReference type="EC" id="6.1.1.15"/>
    </reaction>
</comment>
<comment type="subunit">
    <text evidence="1">Homodimer.</text>
</comment>
<comment type="subcellular location">
    <subcellularLocation>
        <location evidence="1">Cytoplasm</location>
    </subcellularLocation>
</comment>
<comment type="domain">
    <text evidence="1">Consists of three domains: the N-terminal catalytic domain, the editing domain and the C-terminal anticodon-binding domain.</text>
</comment>
<comment type="similarity">
    <text evidence="1">Belongs to the class-II aminoacyl-tRNA synthetase family. ProS type 1 subfamily.</text>
</comment>
<protein>
    <recommendedName>
        <fullName evidence="1">Proline--tRNA ligase</fullName>
        <ecNumber evidence="1">6.1.1.15</ecNumber>
    </recommendedName>
    <alternativeName>
        <fullName evidence="1">Prolyl-tRNA synthetase</fullName>
        <shortName evidence="1">ProRS</shortName>
    </alternativeName>
</protein>
<dbReference type="EC" id="6.1.1.15" evidence="1"/>
<dbReference type="EMBL" id="CP000817">
    <property type="protein sequence ID" value="ACA39190.1"/>
    <property type="molecule type" value="Genomic_DNA"/>
</dbReference>
<dbReference type="RefSeq" id="WP_012293299.1">
    <property type="nucleotide sequence ID" value="NC_010382.1"/>
</dbReference>
<dbReference type="SMR" id="B1HQZ9"/>
<dbReference type="EnsemblBacteria" id="ACA39190">
    <property type="protein sequence ID" value="ACA39190"/>
    <property type="gene ID" value="Bsph_1592"/>
</dbReference>
<dbReference type="KEGG" id="lsp:Bsph_1592"/>
<dbReference type="HOGENOM" id="CLU_016739_0_0_9"/>
<dbReference type="Proteomes" id="UP000002164">
    <property type="component" value="Chromosome"/>
</dbReference>
<dbReference type="GO" id="GO:0005829">
    <property type="term" value="C:cytosol"/>
    <property type="evidence" value="ECO:0007669"/>
    <property type="project" value="TreeGrafter"/>
</dbReference>
<dbReference type="GO" id="GO:0002161">
    <property type="term" value="F:aminoacyl-tRNA deacylase activity"/>
    <property type="evidence" value="ECO:0007669"/>
    <property type="project" value="InterPro"/>
</dbReference>
<dbReference type="GO" id="GO:0005524">
    <property type="term" value="F:ATP binding"/>
    <property type="evidence" value="ECO:0007669"/>
    <property type="project" value="UniProtKB-UniRule"/>
</dbReference>
<dbReference type="GO" id="GO:0140096">
    <property type="term" value="F:catalytic activity, acting on a protein"/>
    <property type="evidence" value="ECO:0007669"/>
    <property type="project" value="UniProtKB-ARBA"/>
</dbReference>
<dbReference type="GO" id="GO:0004827">
    <property type="term" value="F:proline-tRNA ligase activity"/>
    <property type="evidence" value="ECO:0007669"/>
    <property type="project" value="UniProtKB-UniRule"/>
</dbReference>
<dbReference type="GO" id="GO:0016740">
    <property type="term" value="F:transferase activity"/>
    <property type="evidence" value="ECO:0007669"/>
    <property type="project" value="UniProtKB-ARBA"/>
</dbReference>
<dbReference type="GO" id="GO:0006433">
    <property type="term" value="P:prolyl-tRNA aminoacylation"/>
    <property type="evidence" value="ECO:0007669"/>
    <property type="project" value="UniProtKB-UniRule"/>
</dbReference>
<dbReference type="CDD" id="cd04334">
    <property type="entry name" value="ProRS-INS"/>
    <property type="match status" value="1"/>
</dbReference>
<dbReference type="CDD" id="cd00861">
    <property type="entry name" value="ProRS_anticodon_short"/>
    <property type="match status" value="1"/>
</dbReference>
<dbReference type="CDD" id="cd00779">
    <property type="entry name" value="ProRS_core_prok"/>
    <property type="match status" value="1"/>
</dbReference>
<dbReference type="FunFam" id="3.30.930.10:FF:000043">
    <property type="entry name" value="Proline--tRNA ligase"/>
    <property type="match status" value="1"/>
</dbReference>
<dbReference type="FunFam" id="3.30.930.10:FF:000065">
    <property type="entry name" value="Proline--tRNA ligase"/>
    <property type="match status" value="1"/>
</dbReference>
<dbReference type="FunFam" id="3.40.50.800:FF:000011">
    <property type="entry name" value="Proline--tRNA ligase"/>
    <property type="match status" value="1"/>
</dbReference>
<dbReference type="Gene3D" id="3.40.50.800">
    <property type="entry name" value="Anticodon-binding domain"/>
    <property type="match status" value="1"/>
</dbReference>
<dbReference type="Gene3D" id="3.30.930.10">
    <property type="entry name" value="Bira Bifunctional Protein, Domain 2"/>
    <property type="match status" value="2"/>
</dbReference>
<dbReference type="HAMAP" id="MF_01569">
    <property type="entry name" value="Pro_tRNA_synth_type1"/>
    <property type="match status" value="1"/>
</dbReference>
<dbReference type="InterPro" id="IPR002314">
    <property type="entry name" value="aa-tRNA-synt_IIb"/>
</dbReference>
<dbReference type="InterPro" id="IPR006195">
    <property type="entry name" value="aa-tRNA-synth_II"/>
</dbReference>
<dbReference type="InterPro" id="IPR045864">
    <property type="entry name" value="aa-tRNA-synth_II/BPL/LPL"/>
</dbReference>
<dbReference type="InterPro" id="IPR004154">
    <property type="entry name" value="Anticodon-bd"/>
</dbReference>
<dbReference type="InterPro" id="IPR036621">
    <property type="entry name" value="Anticodon-bd_dom_sf"/>
</dbReference>
<dbReference type="InterPro" id="IPR002316">
    <property type="entry name" value="Pro-tRNA-ligase_IIa"/>
</dbReference>
<dbReference type="InterPro" id="IPR004500">
    <property type="entry name" value="Pro-tRNA-synth_IIa_bac-type"/>
</dbReference>
<dbReference type="InterPro" id="IPR023717">
    <property type="entry name" value="Pro-tRNA-Synthase_IIa_type1"/>
</dbReference>
<dbReference type="InterPro" id="IPR050062">
    <property type="entry name" value="Pro-tRNA_synthetase"/>
</dbReference>
<dbReference type="InterPro" id="IPR044140">
    <property type="entry name" value="ProRS_anticodon_short"/>
</dbReference>
<dbReference type="InterPro" id="IPR033730">
    <property type="entry name" value="ProRS_core_prok"/>
</dbReference>
<dbReference type="InterPro" id="IPR036754">
    <property type="entry name" value="YbaK/aa-tRNA-synt-asso_dom_sf"/>
</dbReference>
<dbReference type="InterPro" id="IPR007214">
    <property type="entry name" value="YbaK/aa-tRNA-synth-assoc-dom"/>
</dbReference>
<dbReference type="NCBIfam" id="NF006625">
    <property type="entry name" value="PRK09194.1"/>
    <property type="match status" value="1"/>
</dbReference>
<dbReference type="NCBIfam" id="TIGR00409">
    <property type="entry name" value="proS_fam_II"/>
    <property type="match status" value="1"/>
</dbReference>
<dbReference type="PANTHER" id="PTHR42753">
    <property type="entry name" value="MITOCHONDRIAL RIBOSOME PROTEIN L39/PROLYL-TRNA LIGASE FAMILY MEMBER"/>
    <property type="match status" value="1"/>
</dbReference>
<dbReference type="PANTHER" id="PTHR42753:SF2">
    <property type="entry name" value="PROLINE--TRNA LIGASE"/>
    <property type="match status" value="1"/>
</dbReference>
<dbReference type="Pfam" id="PF03129">
    <property type="entry name" value="HGTP_anticodon"/>
    <property type="match status" value="1"/>
</dbReference>
<dbReference type="Pfam" id="PF00587">
    <property type="entry name" value="tRNA-synt_2b"/>
    <property type="match status" value="1"/>
</dbReference>
<dbReference type="Pfam" id="PF04073">
    <property type="entry name" value="tRNA_edit"/>
    <property type="match status" value="1"/>
</dbReference>
<dbReference type="PIRSF" id="PIRSF001535">
    <property type="entry name" value="ProRS_1"/>
    <property type="match status" value="1"/>
</dbReference>
<dbReference type="PRINTS" id="PR01046">
    <property type="entry name" value="TRNASYNTHPRO"/>
</dbReference>
<dbReference type="SUPFAM" id="SSF52954">
    <property type="entry name" value="Class II aaRS ABD-related"/>
    <property type="match status" value="1"/>
</dbReference>
<dbReference type="SUPFAM" id="SSF55681">
    <property type="entry name" value="Class II aaRS and biotin synthetases"/>
    <property type="match status" value="1"/>
</dbReference>
<dbReference type="SUPFAM" id="SSF55826">
    <property type="entry name" value="YbaK/ProRS associated domain"/>
    <property type="match status" value="1"/>
</dbReference>
<dbReference type="PROSITE" id="PS50862">
    <property type="entry name" value="AA_TRNA_LIGASE_II"/>
    <property type="match status" value="1"/>
</dbReference>
<sequence>MKQSKTFIPTLREVPADAEVKSHKQLLRAGFIRQNTSGVYSYLPLAKRVLSKIETIIREEMEAINSIELLMPSLQSAELWQESGRWEKYGPELMRLKDRHDRDFALGPTHEEVITTLVRDEIKSYKKLPLTLYQIQTKFRDEKRPRFGLLRGREFIMKDAYSFHASRESLDETYDDMYRAYSNIFSRLGLNYRAVIADAGSIGGKGTHEFMVLSEIGEDTIAYSDTSDYAANIEMAEVIADYQTSDEALKEVEKVATPDQKTIEEVSAFLQVKPAHVIKSLVFDVDGELVVVLARGDHEINDIKLKNALEAGSVELASEAAIRELLGCGVGSIGPVKLPVDVKVVADHAIKSIRNGIAGANEDGFHLVNVNPERDFAVNDYLDIRFIQEGDPSPDGQGTIKFAEGIEVGHIFKLGTTYSAKMNGTFLDEQGKSQPFIMGCYGIGVSRILAAVAEHFQDENGFTWPTQLAPYDIHVVPVNTKDEVQVALADELYGLLKSYRYDVLLDDRAERAGVKFADADLIGLPVRVTVGKKATEGIVEVKFRQTGETFEWKKEEVIDRLNEFFRKN</sequence>
<proteinExistence type="inferred from homology"/>